<comment type="function">
    <text evidence="1">Catalyzes the isomerization between 2-isopropylmalate and 3-isopropylmalate, via the formation of 2-isopropylmaleate.</text>
</comment>
<comment type="catalytic activity">
    <reaction evidence="1">
        <text>(2R,3S)-3-isopropylmalate = (2S)-2-isopropylmalate</text>
        <dbReference type="Rhea" id="RHEA:32287"/>
        <dbReference type="ChEBI" id="CHEBI:1178"/>
        <dbReference type="ChEBI" id="CHEBI:35121"/>
        <dbReference type="EC" id="4.2.1.33"/>
    </reaction>
</comment>
<comment type="cofactor">
    <cofactor evidence="1">
        <name>[4Fe-4S] cluster</name>
        <dbReference type="ChEBI" id="CHEBI:49883"/>
    </cofactor>
    <text evidence="1">Binds 1 [4Fe-4S] cluster per subunit.</text>
</comment>
<comment type="pathway">
    <text evidence="1">Amino-acid biosynthesis; L-leucine biosynthesis; L-leucine from 3-methyl-2-oxobutanoate: step 2/4.</text>
</comment>
<comment type="subunit">
    <text evidence="1">Heterodimer of LeuC and LeuD.</text>
</comment>
<comment type="similarity">
    <text evidence="1">Belongs to the aconitase/IPM isomerase family. LeuC type 1 subfamily.</text>
</comment>
<evidence type="ECO:0000255" key="1">
    <source>
        <dbReference type="HAMAP-Rule" id="MF_01026"/>
    </source>
</evidence>
<proteinExistence type="inferred from homology"/>
<feature type="chain" id="PRO_1000135692" description="3-isopropylmalate dehydratase large subunit">
    <location>
        <begin position="1"/>
        <end position="469"/>
    </location>
</feature>
<feature type="binding site" evidence="1">
    <location>
        <position position="346"/>
    </location>
    <ligand>
        <name>[4Fe-4S] cluster</name>
        <dbReference type="ChEBI" id="CHEBI:49883"/>
    </ligand>
</feature>
<feature type="binding site" evidence="1">
    <location>
        <position position="406"/>
    </location>
    <ligand>
        <name>[4Fe-4S] cluster</name>
        <dbReference type="ChEBI" id="CHEBI:49883"/>
    </ligand>
</feature>
<feature type="binding site" evidence="1">
    <location>
        <position position="409"/>
    </location>
    <ligand>
        <name>[4Fe-4S] cluster</name>
        <dbReference type="ChEBI" id="CHEBI:49883"/>
    </ligand>
</feature>
<protein>
    <recommendedName>
        <fullName evidence="1">3-isopropylmalate dehydratase large subunit</fullName>
        <ecNumber evidence="1">4.2.1.33</ecNumber>
    </recommendedName>
    <alternativeName>
        <fullName evidence="1">Alpha-IPM isomerase</fullName>
        <shortName evidence="1">IPMI</shortName>
    </alternativeName>
    <alternativeName>
        <fullName evidence="1">Isopropylmalate isomerase</fullName>
    </alternativeName>
</protein>
<dbReference type="EC" id="4.2.1.33" evidence="1"/>
<dbReference type="EMBL" id="CP000817">
    <property type="protein sequence ID" value="ACA40876.1"/>
    <property type="molecule type" value="Genomic_DNA"/>
</dbReference>
<dbReference type="RefSeq" id="WP_012294940.1">
    <property type="nucleotide sequence ID" value="NC_010382.1"/>
</dbReference>
<dbReference type="SMR" id="B1HR96"/>
<dbReference type="EnsemblBacteria" id="ACA40876">
    <property type="protein sequence ID" value="ACA40876"/>
    <property type="gene ID" value="Bsph_3384"/>
</dbReference>
<dbReference type="KEGG" id="lsp:Bsph_3384"/>
<dbReference type="HOGENOM" id="CLU_006714_3_4_9"/>
<dbReference type="UniPathway" id="UPA00048">
    <property type="reaction ID" value="UER00071"/>
</dbReference>
<dbReference type="Proteomes" id="UP000002164">
    <property type="component" value="Chromosome"/>
</dbReference>
<dbReference type="GO" id="GO:0003861">
    <property type="term" value="F:3-isopropylmalate dehydratase activity"/>
    <property type="evidence" value="ECO:0007669"/>
    <property type="project" value="UniProtKB-UniRule"/>
</dbReference>
<dbReference type="GO" id="GO:0051539">
    <property type="term" value="F:4 iron, 4 sulfur cluster binding"/>
    <property type="evidence" value="ECO:0007669"/>
    <property type="project" value="UniProtKB-KW"/>
</dbReference>
<dbReference type="GO" id="GO:0046872">
    <property type="term" value="F:metal ion binding"/>
    <property type="evidence" value="ECO:0007669"/>
    <property type="project" value="UniProtKB-KW"/>
</dbReference>
<dbReference type="GO" id="GO:0009098">
    <property type="term" value="P:L-leucine biosynthetic process"/>
    <property type="evidence" value="ECO:0007669"/>
    <property type="project" value="UniProtKB-UniRule"/>
</dbReference>
<dbReference type="CDD" id="cd01583">
    <property type="entry name" value="IPMI"/>
    <property type="match status" value="1"/>
</dbReference>
<dbReference type="FunFam" id="3.30.499.10:FF:000007">
    <property type="entry name" value="3-isopropylmalate dehydratase large subunit"/>
    <property type="match status" value="1"/>
</dbReference>
<dbReference type="Gene3D" id="3.30.499.10">
    <property type="entry name" value="Aconitase, domain 3"/>
    <property type="match status" value="2"/>
</dbReference>
<dbReference type="HAMAP" id="MF_01026">
    <property type="entry name" value="LeuC_type1"/>
    <property type="match status" value="1"/>
</dbReference>
<dbReference type="InterPro" id="IPR004430">
    <property type="entry name" value="3-IsopropMal_deHydase_lsu"/>
</dbReference>
<dbReference type="InterPro" id="IPR015931">
    <property type="entry name" value="Acnase/IPM_dHydase_lsu_aba_1/3"/>
</dbReference>
<dbReference type="InterPro" id="IPR001030">
    <property type="entry name" value="Acoase/IPM_deHydtase_lsu_aba"/>
</dbReference>
<dbReference type="InterPro" id="IPR018136">
    <property type="entry name" value="Aconitase_4Fe-4S_BS"/>
</dbReference>
<dbReference type="InterPro" id="IPR036008">
    <property type="entry name" value="Aconitase_4Fe-4S_dom"/>
</dbReference>
<dbReference type="InterPro" id="IPR050067">
    <property type="entry name" value="IPM_dehydratase_rel_enz"/>
</dbReference>
<dbReference type="InterPro" id="IPR033941">
    <property type="entry name" value="IPMI_cat"/>
</dbReference>
<dbReference type="NCBIfam" id="TIGR00170">
    <property type="entry name" value="leuC"/>
    <property type="match status" value="1"/>
</dbReference>
<dbReference type="NCBIfam" id="NF004016">
    <property type="entry name" value="PRK05478.1"/>
    <property type="match status" value="1"/>
</dbReference>
<dbReference type="NCBIfam" id="NF009116">
    <property type="entry name" value="PRK12466.1"/>
    <property type="match status" value="1"/>
</dbReference>
<dbReference type="PANTHER" id="PTHR43822:SF9">
    <property type="entry name" value="3-ISOPROPYLMALATE DEHYDRATASE"/>
    <property type="match status" value="1"/>
</dbReference>
<dbReference type="PANTHER" id="PTHR43822">
    <property type="entry name" value="HOMOACONITASE, MITOCHONDRIAL-RELATED"/>
    <property type="match status" value="1"/>
</dbReference>
<dbReference type="Pfam" id="PF00330">
    <property type="entry name" value="Aconitase"/>
    <property type="match status" value="1"/>
</dbReference>
<dbReference type="PRINTS" id="PR00415">
    <property type="entry name" value="ACONITASE"/>
</dbReference>
<dbReference type="SUPFAM" id="SSF53732">
    <property type="entry name" value="Aconitase iron-sulfur domain"/>
    <property type="match status" value="1"/>
</dbReference>
<dbReference type="PROSITE" id="PS00450">
    <property type="entry name" value="ACONITASE_1"/>
    <property type="match status" value="1"/>
</dbReference>
<dbReference type="PROSITE" id="PS01244">
    <property type="entry name" value="ACONITASE_2"/>
    <property type="match status" value="1"/>
</dbReference>
<reference key="1">
    <citation type="journal article" date="2008" name="J. Bacteriol.">
        <title>Complete genome sequence of the mosquitocidal bacterium Bacillus sphaericus C3-41 and comparison with those of closely related Bacillus species.</title>
        <authorList>
            <person name="Hu X."/>
            <person name="Fan W."/>
            <person name="Han B."/>
            <person name="Liu H."/>
            <person name="Zheng D."/>
            <person name="Li Q."/>
            <person name="Dong W."/>
            <person name="Yan J."/>
            <person name="Gao M."/>
            <person name="Berry C."/>
            <person name="Yuan Z."/>
        </authorList>
    </citation>
    <scope>NUCLEOTIDE SEQUENCE [LARGE SCALE GENOMIC DNA]</scope>
    <source>
        <strain>C3-41</strain>
    </source>
</reference>
<accession>B1HR96</accession>
<name>LEUC_LYSSC</name>
<sequence>MGKNIIEKIWDKHVVYQEEGKPDLLYIDLHLIHEVTSPQAFEGLRMNGRQVRRPDLSFATMDHNVPTKNLPTIHDPIARNQIETLAKNAEEFGVELAGMGHPDQGIVHVIGPELGLTQPGKTIVCGDSHTSTHGAFGAIAFGIGTSEVEHVLSTQTLWQNKPKTMEIRVEGELSVGVAAKDIILAIIAKFGIGVGTGYIVEFTGEAIHKLSMEERMTICNMSIEAGAKAGLISPDQITVDYIRGRKYAPQGEQFEEAANYWLSLASDEDATYDTVRIIHAEEIEPIITWGTNPSMGTGVSGHVPTLADYKDESDKAALQKALDYMGLEEGQPLTSIDIQHVFIGSCTNSRMSDLRAAANVIKGRKVHGDVTAIVVPGSYSTKKQAEAEGLDKIFIDAGFEWRESGCSMCLAMNDDVVPAGERCASTSNRNFEGRQGAGSRTHLVSPPMAAAAAIAGHFVDVREFVKETV</sequence>
<organism>
    <name type="scientific">Lysinibacillus sphaericus (strain C3-41)</name>
    <dbReference type="NCBI Taxonomy" id="444177"/>
    <lineage>
        <taxon>Bacteria</taxon>
        <taxon>Bacillati</taxon>
        <taxon>Bacillota</taxon>
        <taxon>Bacilli</taxon>
        <taxon>Bacillales</taxon>
        <taxon>Bacillaceae</taxon>
        <taxon>Lysinibacillus</taxon>
    </lineage>
</organism>
<gene>
    <name evidence="1" type="primary">leuC</name>
    <name type="ordered locus">Bsph_3384</name>
</gene>
<keyword id="KW-0004">4Fe-4S</keyword>
<keyword id="KW-0028">Amino-acid biosynthesis</keyword>
<keyword id="KW-0100">Branched-chain amino acid biosynthesis</keyword>
<keyword id="KW-0408">Iron</keyword>
<keyword id="KW-0411">Iron-sulfur</keyword>
<keyword id="KW-0432">Leucine biosynthesis</keyword>
<keyword id="KW-0456">Lyase</keyword>
<keyword id="KW-0479">Metal-binding</keyword>